<feature type="chain" id="PRO_0000187541" description="RNA polymerase-binding transcription factor DksA">
    <location>
        <begin position="1"/>
        <end position="151"/>
    </location>
</feature>
<feature type="zinc finger region" description="dksA C4-type" evidence="1">
    <location>
        <begin position="114"/>
        <end position="138"/>
    </location>
</feature>
<feature type="coiled-coil region" evidence="1">
    <location>
        <begin position="33"/>
        <end position="54"/>
    </location>
</feature>
<feature type="binding site" evidence="1">
    <location>
        <position position="114"/>
    </location>
    <ligand>
        <name>Zn(2+)</name>
        <dbReference type="ChEBI" id="CHEBI:29105"/>
    </ligand>
</feature>
<feature type="binding site" evidence="1">
    <location>
        <position position="117"/>
    </location>
    <ligand>
        <name>Zn(2+)</name>
        <dbReference type="ChEBI" id="CHEBI:29105"/>
    </ligand>
</feature>
<feature type="binding site" evidence="1">
    <location>
        <position position="135"/>
    </location>
    <ligand>
        <name>Zn(2+)</name>
        <dbReference type="ChEBI" id="CHEBI:29105"/>
    </ligand>
</feature>
<feature type="binding site" evidence="1">
    <location>
        <position position="138"/>
    </location>
    <ligand>
        <name>Zn(2+)</name>
        <dbReference type="ChEBI" id="CHEBI:29105"/>
    </ligand>
</feature>
<reference key="1">
    <citation type="journal article" date="2002" name="Nucleic Acids Res.">
        <title>Genome sequence of Shigella flexneri 2a: insights into pathogenicity through comparison with genomes of Escherichia coli K12 and O157.</title>
        <authorList>
            <person name="Jin Q."/>
            <person name="Yuan Z."/>
            <person name="Xu J."/>
            <person name="Wang Y."/>
            <person name="Shen Y."/>
            <person name="Lu W."/>
            <person name="Wang J."/>
            <person name="Liu H."/>
            <person name="Yang J."/>
            <person name="Yang F."/>
            <person name="Zhang X."/>
            <person name="Zhang J."/>
            <person name="Yang G."/>
            <person name="Wu H."/>
            <person name="Qu D."/>
            <person name="Dong J."/>
            <person name="Sun L."/>
            <person name="Xue Y."/>
            <person name="Zhao A."/>
            <person name="Gao Y."/>
            <person name="Zhu J."/>
            <person name="Kan B."/>
            <person name="Ding K."/>
            <person name="Chen S."/>
            <person name="Cheng H."/>
            <person name="Yao Z."/>
            <person name="He B."/>
            <person name="Chen R."/>
            <person name="Ma D."/>
            <person name="Qiang B."/>
            <person name="Wen Y."/>
            <person name="Hou Y."/>
            <person name="Yu J."/>
        </authorList>
    </citation>
    <scope>NUCLEOTIDE SEQUENCE [LARGE SCALE GENOMIC DNA]</scope>
    <source>
        <strain>301 / Serotype 2a</strain>
    </source>
</reference>
<reference key="2">
    <citation type="journal article" date="2003" name="Infect. Immun.">
        <title>Complete genome sequence and comparative genomics of Shigella flexneri serotype 2a strain 2457T.</title>
        <authorList>
            <person name="Wei J."/>
            <person name="Goldberg M.B."/>
            <person name="Burland V."/>
            <person name="Venkatesan M.M."/>
            <person name="Deng W."/>
            <person name="Fournier G."/>
            <person name="Mayhew G.F."/>
            <person name="Plunkett G. III"/>
            <person name="Rose D.J."/>
            <person name="Darling A."/>
            <person name="Mau B."/>
            <person name="Perna N.T."/>
            <person name="Payne S.M."/>
            <person name="Runyen-Janecky L.J."/>
            <person name="Zhou S."/>
            <person name="Schwartz D.C."/>
            <person name="Blattner F.R."/>
        </authorList>
    </citation>
    <scope>NUCLEOTIDE SEQUENCE [LARGE SCALE GENOMIC DNA]</scope>
    <source>
        <strain>ATCC 700930 / 2457T / Serotype 2a</strain>
    </source>
</reference>
<dbReference type="EMBL" id="AE005674">
    <property type="protein sequence ID" value="AAN41800.2"/>
    <property type="molecule type" value="Genomic_DNA"/>
</dbReference>
<dbReference type="EMBL" id="AE014073">
    <property type="protein sequence ID" value="AAP15681.1"/>
    <property type="molecule type" value="Genomic_DNA"/>
</dbReference>
<dbReference type="RefSeq" id="NP_706093.2">
    <property type="nucleotide sequence ID" value="NC_004337.2"/>
</dbReference>
<dbReference type="RefSeq" id="WP_001155227.1">
    <property type="nucleotide sequence ID" value="NZ_WPGW01000006.1"/>
</dbReference>
<dbReference type="SMR" id="P0ABS4"/>
<dbReference type="STRING" id="198214.SF0137"/>
<dbReference type="PaxDb" id="198214-SF0137"/>
<dbReference type="GeneID" id="1024482"/>
<dbReference type="GeneID" id="93777282"/>
<dbReference type="KEGG" id="sfl:SF0137"/>
<dbReference type="KEGG" id="sfx:S0140"/>
<dbReference type="PATRIC" id="fig|198214.7.peg.154"/>
<dbReference type="HOGENOM" id="CLU_043144_2_0_6"/>
<dbReference type="Proteomes" id="UP000001006">
    <property type="component" value="Chromosome"/>
</dbReference>
<dbReference type="Proteomes" id="UP000002673">
    <property type="component" value="Chromosome"/>
</dbReference>
<dbReference type="GO" id="GO:0005737">
    <property type="term" value="C:cytoplasm"/>
    <property type="evidence" value="ECO:0007669"/>
    <property type="project" value="UniProtKB-SubCell"/>
</dbReference>
<dbReference type="GO" id="GO:0008270">
    <property type="term" value="F:zinc ion binding"/>
    <property type="evidence" value="ECO:0007669"/>
    <property type="project" value="UniProtKB-UniRule"/>
</dbReference>
<dbReference type="GO" id="GO:0010468">
    <property type="term" value="P:regulation of gene expression"/>
    <property type="evidence" value="ECO:0007669"/>
    <property type="project" value="UniProtKB-UniRule"/>
</dbReference>
<dbReference type="FunFam" id="1.20.120.910:FF:000001">
    <property type="entry name" value="RNA polymerase-binding transcription factor DksA"/>
    <property type="match status" value="1"/>
</dbReference>
<dbReference type="Gene3D" id="1.20.120.910">
    <property type="entry name" value="DksA, coiled-coil domain"/>
    <property type="match status" value="1"/>
</dbReference>
<dbReference type="HAMAP" id="MF_00926">
    <property type="entry name" value="DksA"/>
    <property type="match status" value="1"/>
</dbReference>
<dbReference type="InterPro" id="IPR048489">
    <property type="entry name" value="DksA_N"/>
</dbReference>
<dbReference type="InterPro" id="IPR012784">
    <property type="entry name" value="DksA_RNA_pol-bd"/>
</dbReference>
<dbReference type="InterPro" id="IPR037187">
    <property type="entry name" value="DnaK_N"/>
</dbReference>
<dbReference type="InterPro" id="IPR020460">
    <property type="entry name" value="Znf_C4-type_bac"/>
</dbReference>
<dbReference type="InterPro" id="IPR000962">
    <property type="entry name" value="Znf_DskA_TraR"/>
</dbReference>
<dbReference type="InterPro" id="IPR020458">
    <property type="entry name" value="Znf_DskA_TraR_CS"/>
</dbReference>
<dbReference type="NCBIfam" id="TIGR02420">
    <property type="entry name" value="dksA"/>
    <property type="match status" value="1"/>
</dbReference>
<dbReference type="NCBIfam" id="NF008045">
    <property type="entry name" value="PRK10778.1"/>
    <property type="match status" value="1"/>
</dbReference>
<dbReference type="PANTHER" id="PTHR33823:SF2">
    <property type="entry name" value="RNA POLYMERASE-BINDING TRANSCRIPTION FACTOR DKSA"/>
    <property type="match status" value="1"/>
</dbReference>
<dbReference type="PANTHER" id="PTHR33823">
    <property type="entry name" value="RNA POLYMERASE-BINDING TRANSCRIPTION FACTOR DKSA-RELATED"/>
    <property type="match status" value="1"/>
</dbReference>
<dbReference type="Pfam" id="PF21157">
    <property type="entry name" value="DksA_N"/>
    <property type="match status" value="1"/>
</dbReference>
<dbReference type="Pfam" id="PF01258">
    <property type="entry name" value="zf-dskA_traR"/>
    <property type="match status" value="1"/>
</dbReference>
<dbReference type="PRINTS" id="PR00618">
    <property type="entry name" value="DKSAZNFINGER"/>
</dbReference>
<dbReference type="SUPFAM" id="SSF109635">
    <property type="entry name" value="DnaK suppressor protein DksA, alpha-hairpin domain"/>
    <property type="match status" value="1"/>
</dbReference>
<dbReference type="SUPFAM" id="SSF57716">
    <property type="entry name" value="Glucocorticoid receptor-like (DNA-binding domain)"/>
    <property type="match status" value="1"/>
</dbReference>
<dbReference type="PROSITE" id="PS01102">
    <property type="entry name" value="ZF_DKSA_1"/>
    <property type="match status" value="1"/>
</dbReference>
<dbReference type="PROSITE" id="PS51128">
    <property type="entry name" value="ZF_DKSA_2"/>
    <property type="match status" value="1"/>
</dbReference>
<organism>
    <name type="scientific">Shigella flexneri</name>
    <dbReference type="NCBI Taxonomy" id="623"/>
    <lineage>
        <taxon>Bacteria</taxon>
        <taxon>Pseudomonadati</taxon>
        <taxon>Pseudomonadota</taxon>
        <taxon>Gammaproteobacteria</taxon>
        <taxon>Enterobacterales</taxon>
        <taxon>Enterobacteriaceae</taxon>
        <taxon>Shigella</taxon>
    </lineage>
</organism>
<sequence length="151" mass="17528">MQEGQNRKTSSLSILAIAGVEPYQEKPGEEYMNEAQLAHFRRILEAWRNQLRDEVDRTVTHMQDEAANFPDPVDRAAQEEEFSLELRNRDRERKLIKKIEKTLKKVEDEDFGYCESCGVEIGIRRLEARPTADLCIDCKTLAEIREKQMAG</sequence>
<keyword id="KW-0175">Coiled coil</keyword>
<keyword id="KW-0963">Cytoplasm</keyword>
<keyword id="KW-0479">Metal-binding</keyword>
<keyword id="KW-1185">Reference proteome</keyword>
<keyword id="KW-0862">Zinc</keyword>
<keyword id="KW-0863">Zinc-finger</keyword>
<accession>P0ABS4</accession>
<accession>P18274</accession>
<evidence type="ECO:0000255" key="1">
    <source>
        <dbReference type="HAMAP-Rule" id="MF_00926"/>
    </source>
</evidence>
<comment type="function">
    <text evidence="1">Transcription factor that acts by binding directly to the RNA polymerase (RNAP). Required for negative regulation of rRNA expression and positive regulation of several amino acid biosynthesis promoters. Also required for regulation of fis expression.</text>
</comment>
<comment type="subunit">
    <text evidence="1">Interacts directly with the RNA polymerase.</text>
</comment>
<comment type="subcellular location">
    <subcellularLocation>
        <location evidence="1">Cytoplasm</location>
    </subcellularLocation>
</comment>
<comment type="similarity">
    <text evidence="1">Belongs to the DksA family.</text>
</comment>
<name>DKSA_SHIFL</name>
<proteinExistence type="inferred from homology"/>
<protein>
    <recommendedName>
        <fullName evidence="1">RNA polymerase-binding transcription factor DksA</fullName>
    </recommendedName>
</protein>
<gene>
    <name evidence="1" type="primary">dksA</name>
    <name type="ordered locus">SF0137</name>
    <name type="ordered locus">S0140</name>
</gene>